<proteinExistence type="inferred from homology"/>
<evidence type="ECO:0000255" key="1">
    <source>
        <dbReference type="HAMAP-Rule" id="MF_00421"/>
    </source>
</evidence>
<comment type="function">
    <text evidence="1">Part of the phosphoribosylformylglycinamidine synthase complex involved in the purines biosynthetic pathway. Catalyzes the ATP-dependent conversion of formylglycinamide ribonucleotide (FGAR) and glutamine to yield formylglycinamidine ribonucleotide (FGAM) and glutamate. The FGAM synthase complex is composed of three subunits. PurQ produces an ammonia molecule by converting glutamine to glutamate. PurL transfers the ammonia molecule to FGAR to form FGAM in an ATP-dependent manner. PurS interacts with PurQ and PurL and is thought to assist in the transfer of the ammonia molecule from PurQ to PurL.</text>
</comment>
<comment type="catalytic activity">
    <reaction evidence="1">
        <text>N(2)-formyl-N(1)-(5-phospho-beta-D-ribosyl)glycinamide + L-glutamine + ATP + H2O = 2-formamido-N(1)-(5-O-phospho-beta-D-ribosyl)acetamidine + L-glutamate + ADP + phosphate + H(+)</text>
        <dbReference type="Rhea" id="RHEA:17129"/>
        <dbReference type="ChEBI" id="CHEBI:15377"/>
        <dbReference type="ChEBI" id="CHEBI:15378"/>
        <dbReference type="ChEBI" id="CHEBI:29985"/>
        <dbReference type="ChEBI" id="CHEBI:30616"/>
        <dbReference type="ChEBI" id="CHEBI:43474"/>
        <dbReference type="ChEBI" id="CHEBI:58359"/>
        <dbReference type="ChEBI" id="CHEBI:147286"/>
        <dbReference type="ChEBI" id="CHEBI:147287"/>
        <dbReference type="ChEBI" id="CHEBI:456216"/>
        <dbReference type="EC" id="6.3.5.3"/>
    </reaction>
</comment>
<comment type="catalytic activity">
    <reaction evidence="1">
        <text>L-glutamine + H2O = L-glutamate + NH4(+)</text>
        <dbReference type="Rhea" id="RHEA:15889"/>
        <dbReference type="ChEBI" id="CHEBI:15377"/>
        <dbReference type="ChEBI" id="CHEBI:28938"/>
        <dbReference type="ChEBI" id="CHEBI:29985"/>
        <dbReference type="ChEBI" id="CHEBI:58359"/>
        <dbReference type="EC" id="3.5.1.2"/>
    </reaction>
</comment>
<comment type="pathway">
    <text evidence="1">Purine metabolism; IMP biosynthesis via de novo pathway; 5-amino-1-(5-phospho-D-ribosyl)imidazole from N(2)-formyl-N(1)-(5-phospho-D-ribosyl)glycinamide: step 1/2.</text>
</comment>
<comment type="subunit">
    <text evidence="1">Part of the FGAM synthase complex composed of 1 PurL, 1 PurQ and 2 PurS subunits.</text>
</comment>
<comment type="subcellular location">
    <subcellularLocation>
        <location evidence="1">Cytoplasm</location>
    </subcellularLocation>
</comment>
<dbReference type="EC" id="6.3.5.3" evidence="1"/>
<dbReference type="EC" id="3.5.1.2" evidence="1"/>
<dbReference type="EMBL" id="AP006716">
    <property type="protein sequence ID" value="BAE05198.1"/>
    <property type="molecule type" value="Genomic_DNA"/>
</dbReference>
<dbReference type="RefSeq" id="WP_011276162.1">
    <property type="nucleotide sequence ID" value="NC_007168.1"/>
</dbReference>
<dbReference type="SMR" id="Q4L577"/>
<dbReference type="GeneID" id="93781255"/>
<dbReference type="KEGG" id="sha:SH1889"/>
<dbReference type="eggNOG" id="COG0047">
    <property type="taxonomic scope" value="Bacteria"/>
</dbReference>
<dbReference type="HOGENOM" id="CLU_001031_3_1_9"/>
<dbReference type="OrthoDB" id="9804441at2"/>
<dbReference type="UniPathway" id="UPA00074">
    <property type="reaction ID" value="UER00128"/>
</dbReference>
<dbReference type="Proteomes" id="UP000000543">
    <property type="component" value="Chromosome"/>
</dbReference>
<dbReference type="GO" id="GO:0005737">
    <property type="term" value="C:cytoplasm"/>
    <property type="evidence" value="ECO:0007669"/>
    <property type="project" value="UniProtKB-SubCell"/>
</dbReference>
<dbReference type="GO" id="GO:0005524">
    <property type="term" value="F:ATP binding"/>
    <property type="evidence" value="ECO:0007669"/>
    <property type="project" value="UniProtKB-KW"/>
</dbReference>
<dbReference type="GO" id="GO:0004359">
    <property type="term" value="F:glutaminase activity"/>
    <property type="evidence" value="ECO:0007669"/>
    <property type="project" value="UniProtKB-EC"/>
</dbReference>
<dbReference type="GO" id="GO:0004642">
    <property type="term" value="F:phosphoribosylformylglycinamidine synthase activity"/>
    <property type="evidence" value="ECO:0007669"/>
    <property type="project" value="UniProtKB-UniRule"/>
</dbReference>
<dbReference type="GO" id="GO:0006189">
    <property type="term" value="P:'de novo' IMP biosynthetic process"/>
    <property type="evidence" value="ECO:0007669"/>
    <property type="project" value="UniProtKB-UniRule"/>
</dbReference>
<dbReference type="CDD" id="cd01740">
    <property type="entry name" value="GATase1_FGAR_AT"/>
    <property type="match status" value="1"/>
</dbReference>
<dbReference type="Gene3D" id="3.40.50.880">
    <property type="match status" value="1"/>
</dbReference>
<dbReference type="HAMAP" id="MF_00421">
    <property type="entry name" value="PurQ"/>
    <property type="match status" value="1"/>
</dbReference>
<dbReference type="InterPro" id="IPR029062">
    <property type="entry name" value="Class_I_gatase-like"/>
</dbReference>
<dbReference type="InterPro" id="IPR010075">
    <property type="entry name" value="PRibForGlyAmidine_synth_PurQ"/>
</dbReference>
<dbReference type="NCBIfam" id="TIGR01737">
    <property type="entry name" value="FGAM_synth_I"/>
    <property type="match status" value="1"/>
</dbReference>
<dbReference type="NCBIfam" id="NF002957">
    <property type="entry name" value="PRK03619.1"/>
    <property type="match status" value="1"/>
</dbReference>
<dbReference type="PANTHER" id="PTHR47552">
    <property type="entry name" value="PHOSPHORIBOSYLFORMYLGLYCINAMIDINE SYNTHASE SUBUNIT PURQ"/>
    <property type="match status" value="1"/>
</dbReference>
<dbReference type="PANTHER" id="PTHR47552:SF1">
    <property type="entry name" value="PHOSPHORIBOSYLFORMYLGLYCINAMIDINE SYNTHASE SUBUNIT PURQ"/>
    <property type="match status" value="1"/>
</dbReference>
<dbReference type="Pfam" id="PF13507">
    <property type="entry name" value="GATase_5"/>
    <property type="match status" value="1"/>
</dbReference>
<dbReference type="PIRSF" id="PIRSF001586">
    <property type="entry name" value="FGAM_synth_I"/>
    <property type="match status" value="1"/>
</dbReference>
<dbReference type="SMART" id="SM01211">
    <property type="entry name" value="GATase_5"/>
    <property type="match status" value="1"/>
</dbReference>
<dbReference type="SUPFAM" id="SSF52317">
    <property type="entry name" value="Class I glutamine amidotransferase-like"/>
    <property type="match status" value="1"/>
</dbReference>
<dbReference type="PROSITE" id="PS51273">
    <property type="entry name" value="GATASE_TYPE_1"/>
    <property type="match status" value="1"/>
</dbReference>
<feature type="chain" id="PRO_0000252735" description="Phosphoribosylformylglycinamidine synthase subunit PurQ">
    <location>
        <begin position="1"/>
        <end position="223"/>
    </location>
</feature>
<feature type="domain" description="Glutamine amidotransferase type-1" evidence="1">
    <location>
        <begin position="3"/>
        <end position="223"/>
    </location>
</feature>
<feature type="active site" description="Nucleophile" evidence="1">
    <location>
        <position position="85"/>
    </location>
</feature>
<feature type="active site" evidence="1">
    <location>
        <position position="193"/>
    </location>
</feature>
<feature type="active site" evidence="1">
    <location>
        <position position="195"/>
    </location>
</feature>
<sequence>MKFAVLVFPGSNCDRDMYNAAIKSGAQADYVDYRETSLDGYDGVLIPGGFSFGDYLRSGAMASVAPIINEVKRLANDGKPVLGVCNGFQILTEIGLLPGALLHNDSHLFISRNENLKIANNQTPFTNLYGENEIVVYPVAHGEGHYYCTDDIYNELVENNQIILTYEDNPNGSHENIAGIVNKAGNVCGMMPHPERALEKILGTDSGVKLFEAMVNSWREQNV</sequence>
<reference key="1">
    <citation type="journal article" date="2005" name="J. Bacteriol.">
        <title>Whole-genome sequencing of Staphylococcus haemolyticus uncovers the extreme plasticity of its genome and the evolution of human-colonizing staphylococcal species.</title>
        <authorList>
            <person name="Takeuchi F."/>
            <person name="Watanabe S."/>
            <person name="Baba T."/>
            <person name="Yuzawa H."/>
            <person name="Ito T."/>
            <person name="Morimoto Y."/>
            <person name="Kuroda M."/>
            <person name="Cui L."/>
            <person name="Takahashi M."/>
            <person name="Ankai A."/>
            <person name="Baba S."/>
            <person name="Fukui S."/>
            <person name="Lee J.C."/>
            <person name="Hiramatsu K."/>
        </authorList>
    </citation>
    <scope>NUCLEOTIDE SEQUENCE [LARGE SCALE GENOMIC DNA]</scope>
    <source>
        <strain>JCSC1435</strain>
    </source>
</reference>
<accession>Q4L577</accession>
<keyword id="KW-0067">ATP-binding</keyword>
<keyword id="KW-0963">Cytoplasm</keyword>
<keyword id="KW-0315">Glutamine amidotransferase</keyword>
<keyword id="KW-0378">Hydrolase</keyword>
<keyword id="KW-0436">Ligase</keyword>
<keyword id="KW-0547">Nucleotide-binding</keyword>
<keyword id="KW-0658">Purine biosynthesis</keyword>
<protein>
    <recommendedName>
        <fullName evidence="1">Phosphoribosylformylglycinamidine synthase subunit PurQ</fullName>
        <shortName evidence="1">FGAM synthase</shortName>
        <ecNumber evidence="1">6.3.5.3</ecNumber>
    </recommendedName>
    <alternativeName>
        <fullName evidence="1">Formylglycinamide ribonucleotide amidotransferase subunit I</fullName>
        <shortName evidence="1">FGAR amidotransferase I</shortName>
        <shortName evidence="1">FGAR-AT I</shortName>
    </alternativeName>
    <alternativeName>
        <fullName evidence="1">Glutaminase PurQ</fullName>
        <ecNumber evidence="1">3.5.1.2</ecNumber>
    </alternativeName>
    <alternativeName>
        <fullName evidence="1">Phosphoribosylformylglycinamidine synthase subunit I</fullName>
    </alternativeName>
</protein>
<organism>
    <name type="scientific">Staphylococcus haemolyticus (strain JCSC1435)</name>
    <dbReference type="NCBI Taxonomy" id="279808"/>
    <lineage>
        <taxon>Bacteria</taxon>
        <taxon>Bacillati</taxon>
        <taxon>Bacillota</taxon>
        <taxon>Bacilli</taxon>
        <taxon>Bacillales</taxon>
        <taxon>Staphylococcaceae</taxon>
        <taxon>Staphylococcus</taxon>
    </lineage>
</organism>
<name>PURQ_STAHJ</name>
<gene>
    <name evidence="1" type="primary">purQ</name>
    <name type="ordered locus">SH1889</name>
</gene>